<evidence type="ECO:0000255" key="1">
    <source>
        <dbReference type="HAMAP-Rule" id="MF_00033"/>
    </source>
</evidence>
<feature type="chain" id="PRO_1000116486" description="UDP-N-acetylglucosamine--N-acetylmuramyl-(pentapeptide) pyrophosphoryl-undecaprenol N-acetylglucosamine transferase">
    <location>
        <begin position="1"/>
        <end position="334"/>
    </location>
</feature>
<feature type="binding site" evidence="1">
    <location>
        <begin position="11"/>
        <end position="13"/>
    </location>
    <ligand>
        <name>UDP-N-acetyl-alpha-D-glucosamine</name>
        <dbReference type="ChEBI" id="CHEBI:57705"/>
    </ligand>
</feature>
<feature type="binding site" evidence="1">
    <location>
        <position position="125"/>
    </location>
    <ligand>
        <name>UDP-N-acetyl-alpha-D-glucosamine</name>
        <dbReference type="ChEBI" id="CHEBI:57705"/>
    </ligand>
</feature>
<feature type="binding site" evidence="1">
    <location>
        <position position="185"/>
    </location>
    <ligand>
        <name>UDP-N-acetyl-alpha-D-glucosamine</name>
        <dbReference type="ChEBI" id="CHEBI:57705"/>
    </ligand>
</feature>
<feature type="binding site" evidence="1">
    <location>
        <position position="229"/>
    </location>
    <ligand>
        <name>UDP-N-acetyl-alpha-D-glucosamine</name>
        <dbReference type="ChEBI" id="CHEBI:57705"/>
    </ligand>
</feature>
<feature type="binding site" evidence="1">
    <location>
        <position position="274"/>
    </location>
    <ligand>
        <name>UDP-N-acetyl-alpha-D-glucosamine</name>
        <dbReference type="ChEBI" id="CHEBI:57705"/>
    </ligand>
</feature>
<keyword id="KW-0131">Cell cycle</keyword>
<keyword id="KW-0132">Cell division</keyword>
<keyword id="KW-0997">Cell inner membrane</keyword>
<keyword id="KW-1003">Cell membrane</keyword>
<keyword id="KW-0133">Cell shape</keyword>
<keyword id="KW-0961">Cell wall biogenesis/degradation</keyword>
<keyword id="KW-0328">Glycosyltransferase</keyword>
<keyword id="KW-0472">Membrane</keyword>
<keyword id="KW-0573">Peptidoglycan synthesis</keyword>
<keyword id="KW-1185">Reference proteome</keyword>
<keyword id="KW-0808">Transferase</keyword>
<reference key="1">
    <citation type="journal article" date="2009" name="J. Bacteriol.">
        <title>The genome of Thermosipho africanus TCF52B: lateral genetic connections to the Firmicutes and Archaea.</title>
        <authorList>
            <person name="Nesboe C.L."/>
            <person name="Bapteste E."/>
            <person name="Curtis B."/>
            <person name="Dahle H."/>
            <person name="Lopez P."/>
            <person name="Macleod D."/>
            <person name="Dlutek M."/>
            <person name="Bowman S."/>
            <person name="Zhaxybayeva O."/>
            <person name="Birkeland N.-K."/>
            <person name="Doolittle W.F."/>
        </authorList>
    </citation>
    <scope>NUCLEOTIDE SEQUENCE [LARGE SCALE GENOMIC DNA]</scope>
    <source>
        <strain>TCF52B</strain>
    </source>
</reference>
<name>MURG_THEAB</name>
<dbReference type="EC" id="2.4.1.227" evidence="1"/>
<dbReference type="EMBL" id="CP001185">
    <property type="protein sequence ID" value="ACJ75601.1"/>
    <property type="molecule type" value="Genomic_DNA"/>
</dbReference>
<dbReference type="RefSeq" id="WP_012580037.1">
    <property type="nucleotide sequence ID" value="NC_011653.1"/>
</dbReference>
<dbReference type="SMR" id="B7IHN7"/>
<dbReference type="STRING" id="484019.THA_1149"/>
<dbReference type="CAZy" id="GT28">
    <property type="family name" value="Glycosyltransferase Family 28"/>
</dbReference>
<dbReference type="KEGG" id="taf:THA_1149"/>
<dbReference type="eggNOG" id="COG0707">
    <property type="taxonomic scope" value="Bacteria"/>
</dbReference>
<dbReference type="HOGENOM" id="CLU_037404_0_1_0"/>
<dbReference type="OrthoDB" id="9808936at2"/>
<dbReference type="UniPathway" id="UPA00219"/>
<dbReference type="Proteomes" id="UP000002453">
    <property type="component" value="Chromosome"/>
</dbReference>
<dbReference type="GO" id="GO:0005886">
    <property type="term" value="C:plasma membrane"/>
    <property type="evidence" value="ECO:0007669"/>
    <property type="project" value="UniProtKB-SubCell"/>
</dbReference>
<dbReference type="GO" id="GO:0051991">
    <property type="term" value="F:UDP-N-acetyl-D-glucosamine:N-acetylmuramoyl-L-alanyl-D-glutamyl-meso-2,6-diaminopimelyl-D-alanyl-D-alanine-diphosphoundecaprenol 4-beta-N-acetylglucosaminlytransferase activity"/>
    <property type="evidence" value="ECO:0007669"/>
    <property type="project" value="RHEA"/>
</dbReference>
<dbReference type="GO" id="GO:0050511">
    <property type="term" value="F:undecaprenyldiphospho-muramoylpentapeptide beta-N-acetylglucosaminyltransferase activity"/>
    <property type="evidence" value="ECO:0007669"/>
    <property type="project" value="UniProtKB-UniRule"/>
</dbReference>
<dbReference type="GO" id="GO:0005975">
    <property type="term" value="P:carbohydrate metabolic process"/>
    <property type="evidence" value="ECO:0007669"/>
    <property type="project" value="InterPro"/>
</dbReference>
<dbReference type="GO" id="GO:0051301">
    <property type="term" value="P:cell division"/>
    <property type="evidence" value="ECO:0007669"/>
    <property type="project" value="UniProtKB-KW"/>
</dbReference>
<dbReference type="GO" id="GO:0071555">
    <property type="term" value="P:cell wall organization"/>
    <property type="evidence" value="ECO:0007669"/>
    <property type="project" value="UniProtKB-KW"/>
</dbReference>
<dbReference type="GO" id="GO:0030259">
    <property type="term" value="P:lipid glycosylation"/>
    <property type="evidence" value="ECO:0007669"/>
    <property type="project" value="UniProtKB-UniRule"/>
</dbReference>
<dbReference type="GO" id="GO:0009252">
    <property type="term" value="P:peptidoglycan biosynthetic process"/>
    <property type="evidence" value="ECO:0007669"/>
    <property type="project" value="UniProtKB-UniRule"/>
</dbReference>
<dbReference type="GO" id="GO:0008360">
    <property type="term" value="P:regulation of cell shape"/>
    <property type="evidence" value="ECO:0007669"/>
    <property type="project" value="UniProtKB-KW"/>
</dbReference>
<dbReference type="CDD" id="cd03785">
    <property type="entry name" value="GT28_MurG"/>
    <property type="match status" value="1"/>
</dbReference>
<dbReference type="Gene3D" id="3.40.50.2000">
    <property type="entry name" value="Glycogen Phosphorylase B"/>
    <property type="match status" value="2"/>
</dbReference>
<dbReference type="HAMAP" id="MF_00033">
    <property type="entry name" value="MurG"/>
    <property type="match status" value="1"/>
</dbReference>
<dbReference type="InterPro" id="IPR006009">
    <property type="entry name" value="GlcNAc_MurG"/>
</dbReference>
<dbReference type="InterPro" id="IPR007235">
    <property type="entry name" value="Glyco_trans_28_C"/>
</dbReference>
<dbReference type="InterPro" id="IPR004276">
    <property type="entry name" value="GlycoTrans_28_N"/>
</dbReference>
<dbReference type="PANTHER" id="PTHR21015:SF22">
    <property type="entry name" value="GLYCOSYLTRANSFERASE"/>
    <property type="match status" value="1"/>
</dbReference>
<dbReference type="PANTHER" id="PTHR21015">
    <property type="entry name" value="UDP-N-ACETYLGLUCOSAMINE--N-ACETYLMURAMYL-(PENTAPEPTIDE) PYROPHOSPHORYL-UNDECAPRENOL N-ACETYLGLUCOSAMINE TRANSFERASE 1"/>
    <property type="match status" value="1"/>
</dbReference>
<dbReference type="Pfam" id="PF04101">
    <property type="entry name" value="Glyco_tran_28_C"/>
    <property type="match status" value="1"/>
</dbReference>
<dbReference type="Pfam" id="PF03033">
    <property type="entry name" value="Glyco_transf_28"/>
    <property type="match status" value="1"/>
</dbReference>
<dbReference type="SUPFAM" id="SSF53756">
    <property type="entry name" value="UDP-Glycosyltransferase/glycogen phosphorylase"/>
    <property type="match status" value="1"/>
</dbReference>
<comment type="function">
    <text evidence="1">Cell wall formation. Catalyzes the transfer of a GlcNAc subunit on undecaprenyl-pyrophosphoryl-MurNAc-pentapeptide (lipid intermediate I) to form undecaprenyl-pyrophosphoryl-MurNAc-(pentapeptide)GlcNAc (lipid intermediate II).</text>
</comment>
<comment type="catalytic activity">
    <reaction evidence="1">
        <text>di-trans,octa-cis-undecaprenyl diphospho-N-acetyl-alpha-D-muramoyl-L-alanyl-D-glutamyl-meso-2,6-diaminopimeloyl-D-alanyl-D-alanine + UDP-N-acetyl-alpha-D-glucosamine = di-trans,octa-cis-undecaprenyl diphospho-[N-acetyl-alpha-D-glucosaminyl-(1-&gt;4)]-N-acetyl-alpha-D-muramoyl-L-alanyl-D-glutamyl-meso-2,6-diaminopimeloyl-D-alanyl-D-alanine + UDP + H(+)</text>
        <dbReference type="Rhea" id="RHEA:31227"/>
        <dbReference type="ChEBI" id="CHEBI:15378"/>
        <dbReference type="ChEBI" id="CHEBI:57705"/>
        <dbReference type="ChEBI" id="CHEBI:58223"/>
        <dbReference type="ChEBI" id="CHEBI:61387"/>
        <dbReference type="ChEBI" id="CHEBI:61388"/>
        <dbReference type="EC" id="2.4.1.227"/>
    </reaction>
</comment>
<comment type="pathway">
    <text evidence="1">Cell wall biogenesis; peptidoglycan biosynthesis.</text>
</comment>
<comment type="subcellular location">
    <subcellularLocation>
        <location evidence="1">Cell inner membrane</location>
        <topology evidence="1">Peripheral membrane protein</topology>
        <orientation evidence="1">Cytoplasmic side</orientation>
    </subcellularLocation>
</comment>
<comment type="similarity">
    <text evidence="1">Belongs to the glycosyltransferase 28 family. MurG subfamily.</text>
</comment>
<sequence>MIKIAVAGGVTGGHLYPALAVLKELEKLTPIDVLYFTVSGKLEERVLKDYNYKKVSLKIQGLKRPVYSIENIKRLFKIFNANNIVLKELKKFKPDIVFVTGGYVSYPVGTAAKKLKIPLYIQEQNVIPGLANIKLSSFAKKVFVSFEESKKYFQRDVVVAGNPILICHKENLNFEKKTILIVGGSGGSEFLNSLACKLSNKLKDYHFILSSGRKEVPCKSENLTILDYIENMSDYYSAVSCAITRGGATTVSELIFFDTPSIIIPWEGSTEAHQIENAKQIEKLGLGYVIREKEVNIDEIANKIIELSNRERKGSPKTNPAILIAKEIKNEVLK</sequence>
<protein>
    <recommendedName>
        <fullName evidence="1">UDP-N-acetylglucosamine--N-acetylmuramyl-(pentapeptide) pyrophosphoryl-undecaprenol N-acetylglucosamine transferase</fullName>
        <ecNumber evidence="1">2.4.1.227</ecNumber>
    </recommendedName>
    <alternativeName>
        <fullName evidence="1">Undecaprenyl-PP-MurNAc-pentapeptide-UDPGlcNAc GlcNAc transferase</fullName>
    </alternativeName>
</protein>
<proteinExistence type="inferred from homology"/>
<accession>B7IHN7</accession>
<gene>
    <name evidence="1" type="primary">murG</name>
    <name type="ordered locus">THA_1149</name>
</gene>
<organism>
    <name type="scientific">Thermosipho africanus (strain TCF52B)</name>
    <dbReference type="NCBI Taxonomy" id="484019"/>
    <lineage>
        <taxon>Bacteria</taxon>
        <taxon>Thermotogati</taxon>
        <taxon>Thermotogota</taxon>
        <taxon>Thermotogae</taxon>
        <taxon>Thermotogales</taxon>
        <taxon>Fervidobacteriaceae</taxon>
        <taxon>Thermosipho</taxon>
    </lineage>
</organism>